<name>STT3A_CANLF</name>
<feature type="chain" id="PRO_0000439492" description="Dolichyl-diphosphooligosaccharide--protein glycosyltransferase subunit STT3A">
    <location>
        <begin position="1"/>
        <end position="705"/>
    </location>
</feature>
<feature type="topological domain" description="Cytoplasmic" evidence="10">
    <location>
        <begin position="1"/>
        <end position="15"/>
    </location>
</feature>
<feature type="transmembrane region" description="Helical" evidence="9">
    <location>
        <begin position="16"/>
        <end position="34"/>
    </location>
</feature>
<feature type="topological domain" description="Lumenal" evidence="10">
    <location>
        <begin position="35"/>
        <end position="111"/>
    </location>
</feature>
<feature type="transmembrane region" description="Helical" evidence="9">
    <location>
        <begin position="112"/>
        <end position="141"/>
    </location>
</feature>
<feature type="topological domain" description="Cytoplasmic" evidence="10">
    <location>
        <position position="142"/>
    </location>
</feature>
<feature type="transmembrane region" description="Helical" evidence="9">
    <location>
        <begin position="143"/>
        <end position="158"/>
    </location>
</feature>
<feature type="topological domain" description="Lumenal" evidence="10">
    <location>
        <begin position="159"/>
        <end position="170"/>
    </location>
</feature>
<feature type="transmembrane region" description="Helical" evidence="9">
    <location>
        <begin position="171"/>
        <end position="188"/>
    </location>
</feature>
<feature type="topological domain" description="Cytoplasmic" evidence="10">
    <location>
        <begin position="189"/>
        <end position="191"/>
    </location>
</feature>
<feature type="transmembrane region" description="Helical" evidence="9">
    <location>
        <begin position="192"/>
        <end position="207"/>
    </location>
</feature>
<feature type="topological domain" description="Lumenal" evidence="10">
    <location>
        <begin position="208"/>
        <end position="210"/>
    </location>
</feature>
<feature type="transmembrane region" description="Helical" evidence="9">
    <location>
        <begin position="211"/>
        <end position="229"/>
    </location>
</feature>
<feature type="topological domain" description="Cytoplasmic" evidence="10">
    <location>
        <begin position="230"/>
        <end position="234"/>
    </location>
</feature>
<feature type="transmembrane region" description="Helical" evidence="9">
    <location>
        <begin position="235"/>
        <end position="253"/>
    </location>
</feature>
<feature type="topological domain" description="Lumenal" evidence="10">
    <location>
        <begin position="254"/>
        <end position="265"/>
    </location>
</feature>
<feature type="transmembrane region" description="Helical" evidence="9">
    <location>
        <begin position="266"/>
        <end position="283"/>
    </location>
</feature>
<feature type="topological domain" description="Cytoplasmic" evidence="10">
    <location>
        <begin position="284"/>
        <end position="298"/>
    </location>
</feature>
<feature type="transmembrane region" description="Helical" evidence="9">
    <location>
        <begin position="299"/>
        <end position="317"/>
    </location>
</feature>
<feature type="topological domain" description="Lumenal" evidence="10">
    <location>
        <begin position="318"/>
        <end position="356"/>
    </location>
</feature>
<feature type="transmembrane region" description="Helical" evidence="2">
    <location>
        <begin position="357"/>
        <end position="379"/>
    </location>
</feature>
<feature type="topological domain" description="Cytoplasmic" evidence="10">
    <location>
        <begin position="380"/>
        <end position="385"/>
    </location>
</feature>
<feature type="transmembrane region" description="Helical" evidence="2">
    <location>
        <begin position="386"/>
        <end position="402"/>
    </location>
</feature>
<feature type="topological domain" description="Lumenal" evidence="10">
    <location>
        <begin position="403"/>
        <end position="406"/>
    </location>
</feature>
<feature type="transmembrane region" description="Helical" evidence="2">
    <location>
        <begin position="407"/>
        <end position="428"/>
    </location>
</feature>
<feature type="topological domain" description="Cytoplasmic" evidence="10">
    <location>
        <begin position="429"/>
        <end position="453"/>
    </location>
</feature>
<feature type="transmembrane region" description="Helical" evidence="2">
    <location>
        <begin position="454"/>
        <end position="473"/>
    </location>
</feature>
<feature type="topological domain" description="Lumenal" evidence="10">
    <location>
        <begin position="474"/>
        <end position="705"/>
    </location>
</feature>
<feature type="region of interest" description="Interacts with target acceptor peptide in protein substrate" evidence="1">
    <location>
        <begin position="525"/>
        <end position="527"/>
    </location>
</feature>
<feature type="short sequence motif" description="DXD motif 1" evidence="4">
    <location>
        <begin position="47"/>
        <end position="49"/>
    </location>
</feature>
<feature type="short sequence motif" description="DXD motif 2" evidence="2">
    <location>
        <begin position="167"/>
        <end position="169"/>
    </location>
</feature>
<feature type="short sequence motif" description="SVSE motif" evidence="4">
    <location>
        <begin position="348"/>
        <end position="351"/>
    </location>
</feature>
<feature type="short sequence motif" description="WWDYG motif" evidence="2">
    <location>
        <begin position="525"/>
        <end position="529"/>
    </location>
</feature>
<feature type="short sequence motif" description="DK motif" evidence="2">
    <location>
        <begin position="592"/>
        <end position="599"/>
    </location>
</feature>
<feature type="binding site" evidence="1">
    <location>
        <position position="49"/>
    </location>
    <ligand>
        <name>Mn(2+)</name>
        <dbReference type="ChEBI" id="CHEBI:29035"/>
    </ligand>
</feature>
<feature type="binding site" evidence="1">
    <location>
        <position position="167"/>
    </location>
    <ligand>
        <name>Mn(2+)</name>
        <dbReference type="ChEBI" id="CHEBI:29035"/>
    </ligand>
</feature>
<feature type="binding site" evidence="1">
    <location>
        <position position="169"/>
    </location>
    <ligand>
        <name>Mn(2+)</name>
        <dbReference type="ChEBI" id="CHEBI:29035"/>
    </ligand>
</feature>
<feature type="binding site" evidence="1">
    <location>
        <position position="405"/>
    </location>
    <ligand>
        <name>dolichyl diphosphooligosaccharide</name>
        <dbReference type="ChEBI" id="CHEBI:57570"/>
    </ligand>
</feature>
<feature type="binding site" evidence="1">
    <location>
        <position position="530"/>
    </location>
    <ligand>
        <name>dolichyl diphosphooligosaccharide</name>
        <dbReference type="ChEBI" id="CHEBI:57570"/>
    </ligand>
</feature>
<feature type="site" description="Interacts with target acceptor peptide in protein substrate" evidence="1">
    <location>
        <position position="49"/>
    </location>
</feature>
<feature type="site" description="Important for catalytic activity" evidence="1">
    <location>
        <position position="160"/>
    </location>
</feature>
<feature type="site" description="Interacts with target acceptor peptide in protein substrate" evidence="1">
    <location>
        <position position="351"/>
    </location>
</feature>
<feature type="site" description="Interacts with target acceptor peptide in protein substrate" evidence="1">
    <location>
        <position position="595"/>
    </location>
</feature>
<feature type="glycosylation site" description="N-linked (GlcNAc...) asparagine" evidence="5">
    <location>
        <position position="537"/>
    </location>
</feature>
<feature type="glycosylation site" description="N-linked (GlcNAc...) asparagine" evidence="5">
    <location>
        <position position="544"/>
    </location>
</feature>
<feature type="glycosylation site" description="N-linked (GlcNAc...) (high mannose) asparagine" evidence="2">
    <location>
        <position position="548"/>
    </location>
</feature>
<organism>
    <name type="scientific">Canis lupus familiaris</name>
    <name type="common">Dog</name>
    <name type="synonym">Canis familiaris</name>
    <dbReference type="NCBI Taxonomy" id="9615"/>
    <lineage>
        <taxon>Eukaryota</taxon>
        <taxon>Metazoa</taxon>
        <taxon>Chordata</taxon>
        <taxon>Craniata</taxon>
        <taxon>Vertebrata</taxon>
        <taxon>Euteleostomi</taxon>
        <taxon>Mammalia</taxon>
        <taxon>Eutheria</taxon>
        <taxon>Laurasiatheria</taxon>
        <taxon>Carnivora</taxon>
        <taxon>Caniformia</taxon>
        <taxon>Canidae</taxon>
        <taxon>Canis</taxon>
    </lineage>
</organism>
<gene>
    <name evidence="3" type="primary">STT3A</name>
</gene>
<accession>F1PJP5</accession>
<keyword id="KW-0002">3D-structure</keyword>
<keyword id="KW-0256">Endoplasmic reticulum</keyword>
<keyword id="KW-0325">Glycoprotein</keyword>
<keyword id="KW-0328">Glycosyltransferase</keyword>
<keyword id="KW-0460">Magnesium</keyword>
<keyword id="KW-0464">Manganese</keyword>
<keyword id="KW-0472">Membrane</keyword>
<keyword id="KW-0479">Metal-binding</keyword>
<keyword id="KW-1185">Reference proteome</keyword>
<keyword id="KW-0808">Transferase</keyword>
<keyword id="KW-0812">Transmembrane</keyword>
<keyword id="KW-1133">Transmembrane helix</keyword>
<comment type="function">
    <text evidence="3 6">Catalytic subunit of the oligosaccharyl transferase (OST) complex that catalyzes the initial transfer of a defined glycan (Glc(3)Man(9)GlcNAc(2) in eukaryotes) from the lipid carrier dolichol-pyrophosphate to an asparagine residue within an Asn-X-Ser/Thr consensus motif in nascent polypeptide chains, the first step in protein N-glycosylation (By similarity). N-glycosylation occurs cotranslationally and the complex associates with the Sec61 complex at the channel-forming translocon complex that mediates protein translocation across the endoplasmic reticulum (ER) (By similarity). All subunits are required for a maximal enzyme activity (By similarity). This subunit contains the active site and the acceptor peptide and donor lipid-linked oligosaccharide (LLO) binding pockets (By similarity). STT3A is present in the majority of OST complexes and mediates cotranslational N-glycosylation of most sites on target proteins, while STT3B-containing complexes are required for efficient post-translational glycosylation and mediate glycosylation of sites that have been skipped by STT3A (PubMed:12887896). STT3A-containing OST-A complex is also required to prevent hyperglycosylation of some target proteins by preventing glycosylation of facultative sites before folding of target proteins is completed (By similarity).</text>
</comment>
<comment type="catalytic activity">
    <reaction evidence="2">
        <text>a di-trans,poly-cis-dolichyl diphosphooligosaccharide + L-asparaginyl-[protein] = N(4)-(oligosaccharide-(1-&gt;4)-N-acetyl-beta-D-glucosaminyl-(1-&gt;4)-N-acetyl-beta-D-glucosaminyl)-L-asparaginyl-[protein] + a di-trans,poly-cis-dolichyl diphosphate + H(+)</text>
        <dbReference type="Rhea" id="RHEA:22980"/>
        <dbReference type="Rhea" id="RHEA-COMP:12804"/>
        <dbReference type="Rhea" id="RHEA-COMP:12805"/>
        <dbReference type="Rhea" id="RHEA-COMP:19506"/>
        <dbReference type="Rhea" id="RHEA-COMP:19509"/>
        <dbReference type="ChEBI" id="CHEBI:15378"/>
        <dbReference type="ChEBI" id="CHEBI:50347"/>
        <dbReference type="ChEBI" id="CHEBI:57497"/>
        <dbReference type="ChEBI" id="CHEBI:57570"/>
        <dbReference type="ChEBI" id="CHEBI:132529"/>
        <dbReference type="EC" id="2.4.99.18"/>
    </reaction>
</comment>
<comment type="cofactor">
    <cofactor evidence="3">
        <name>Mg(2+)</name>
        <dbReference type="ChEBI" id="CHEBI:18420"/>
    </cofactor>
    <cofactor evidence="1">
        <name>Mn(2+)</name>
        <dbReference type="ChEBI" id="CHEBI:29035"/>
    </cofactor>
</comment>
<comment type="pathway">
    <text evidence="3">Protein modification; protein glycosylation.</text>
</comment>
<comment type="subunit">
    <text evidence="6 7 8 9">Component of the oligosaccharyltransferase (OST) complex (PubMed:12887896, PubMed:15835887, PubMed:25135935). There are 2 OST complexes, OST-A and OST-B, which contain STT3A or STT3B as catalytic subunit, respectively (PubMed:12887896, PubMed:15835887, PubMed:25135935). OST-A and OST-B contain common core subunits RPN1, RPN2, OST48, OST4, DAD1 and TMEM258, and OST-A contains DC2/OSTC and KRTCAP2/KCP2 specific accessory subunits (PubMed:12887896, PubMed:15835887, PubMed:25135935). OST-A complex assembly occurs through the formation of 3 subcomplexes (PubMed:29519914). Subcomplex 1 contains RPN1 and TMEM258, subcomplex 2 contains the OST-A-specific subunits STT3A, DC2/OSTC, and KCP2 as well as the core subunit OST4, and subcomplex 3 contains RPN2, DAD1, and OST48 (PubMed:29519914). The OST-A complex can form stable complexes with the Sec61 complex or with both the Sec61 and TRAP complexes (PubMed:29519914).</text>
</comment>
<comment type="subcellular location">
    <subcellularLocation>
        <location evidence="6">Endoplasmic reticulum membrane</location>
        <topology evidence="9">Multi-pass membrane protein</topology>
    </subcellularLocation>
</comment>
<comment type="domain">
    <text evidence="2">Despite low primary sequence conservation between eukaryotic catalytic subunits and bacterial and archaeal single subunit OSTs (ssOST), structural comparison revealed several common motifs at spatially equivalent positions, like the DXD motif 1 on the external loop 1 and the DXD motif 2 on the external loop 2 involved in binding of the metal ion cofactor and the carboxamide group of the acceptor asparagine, the conserved Glu residue of the TIXE/SVSE motif on the external loop 5 involved in catalysis, as well as the WWDYG and the DK/MI motifs in the globular domain that define the binding pocket for the +2 Ser/Thr of the acceptor sequon. In bacterial ssOSTs, an Arg residue was found to interact with a negatively charged side chain at the -2 position of the sequon. This Arg is conserved in bacterial enzymes and correlates with an extended sequon requirement (Asp-X-Asn-X-Ser/Thr) for bacterial N-glycosylation.</text>
</comment>
<comment type="similarity">
    <text evidence="10">Belongs to the STT3 family.</text>
</comment>
<proteinExistence type="evidence at protein level"/>
<reference key="1">
    <citation type="journal article" date="2005" name="Nature">
        <title>Genome sequence, comparative analysis and haplotype structure of the domestic dog.</title>
        <authorList>
            <person name="Lindblad-Toh K."/>
            <person name="Wade C.M."/>
            <person name="Mikkelsen T.S."/>
            <person name="Karlsson E.K."/>
            <person name="Jaffe D.B."/>
            <person name="Kamal M."/>
            <person name="Clamp M."/>
            <person name="Chang J.L."/>
            <person name="Kulbokas E.J. III"/>
            <person name="Zody M.C."/>
            <person name="Mauceli E."/>
            <person name="Xie X."/>
            <person name="Breen M."/>
            <person name="Wayne R.K."/>
            <person name="Ostrander E.A."/>
            <person name="Ponting C.P."/>
            <person name="Galibert F."/>
            <person name="Smith D.R."/>
            <person name="deJong P.J."/>
            <person name="Kirkness E.F."/>
            <person name="Alvarez P."/>
            <person name="Biagi T."/>
            <person name="Brockman W."/>
            <person name="Butler J."/>
            <person name="Chin C.-W."/>
            <person name="Cook A."/>
            <person name="Cuff J."/>
            <person name="Daly M.J."/>
            <person name="DeCaprio D."/>
            <person name="Gnerre S."/>
            <person name="Grabherr M."/>
            <person name="Kellis M."/>
            <person name="Kleber M."/>
            <person name="Bardeleben C."/>
            <person name="Goodstadt L."/>
            <person name="Heger A."/>
            <person name="Hitte C."/>
            <person name="Kim L."/>
            <person name="Koepfli K.-P."/>
            <person name="Parker H.G."/>
            <person name="Pollinger J.P."/>
            <person name="Searle S.M.J."/>
            <person name="Sutter N.B."/>
            <person name="Thomas R."/>
            <person name="Webber C."/>
            <person name="Baldwin J."/>
            <person name="Abebe A."/>
            <person name="Abouelleil A."/>
            <person name="Aftuck L."/>
            <person name="Ait-Zahra M."/>
            <person name="Aldredge T."/>
            <person name="Allen N."/>
            <person name="An P."/>
            <person name="Anderson S."/>
            <person name="Antoine C."/>
            <person name="Arachchi H."/>
            <person name="Aslam A."/>
            <person name="Ayotte L."/>
            <person name="Bachantsang P."/>
            <person name="Barry A."/>
            <person name="Bayul T."/>
            <person name="Benamara M."/>
            <person name="Berlin A."/>
            <person name="Bessette D."/>
            <person name="Blitshteyn B."/>
            <person name="Bloom T."/>
            <person name="Blye J."/>
            <person name="Boguslavskiy L."/>
            <person name="Bonnet C."/>
            <person name="Boukhgalter B."/>
            <person name="Brown A."/>
            <person name="Cahill P."/>
            <person name="Calixte N."/>
            <person name="Camarata J."/>
            <person name="Cheshatsang Y."/>
            <person name="Chu J."/>
            <person name="Citroen M."/>
            <person name="Collymore A."/>
            <person name="Cooke P."/>
            <person name="Dawoe T."/>
            <person name="Daza R."/>
            <person name="Decktor K."/>
            <person name="DeGray S."/>
            <person name="Dhargay N."/>
            <person name="Dooley K."/>
            <person name="Dooley K."/>
            <person name="Dorje P."/>
            <person name="Dorjee K."/>
            <person name="Dorris L."/>
            <person name="Duffey N."/>
            <person name="Dupes A."/>
            <person name="Egbiremolen O."/>
            <person name="Elong R."/>
            <person name="Falk J."/>
            <person name="Farina A."/>
            <person name="Faro S."/>
            <person name="Ferguson D."/>
            <person name="Ferreira P."/>
            <person name="Fisher S."/>
            <person name="FitzGerald M."/>
            <person name="Foley K."/>
            <person name="Foley C."/>
            <person name="Franke A."/>
            <person name="Friedrich D."/>
            <person name="Gage D."/>
            <person name="Garber M."/>
            <person name="Gearin G."/>
            <person name="Giannoukos G."/>
            <person name="Goode T."/>
            <person name="Goyette A."/>
            <person name="Graham J."/>
            <person name="Grandbois E."/>
            <person name="Gyaltsen K."/>
            <person name="Hafez N."/>
            <person name="Hagopian D."/>
            <person name="Hagos B."/>
            <person name="Hall J."/>
            <person name="Healy C."/>
            <person name="Hegarty R."/>
            <person name="Honan T."/>
            <person name="Horn A."/>
            <person name="Houde N."/>
            <person name="Hughes L."/>
            <person name="Hunnicutt L."/>
            <person name="Husby M."/>
            <person name="Jester B."/>
            <person name="Jones C."/>
            <person name="Kamat A."/>
            <person name="Kanga B."/>
            <person name="Kells C."/>
            <person name="Khazanovich D."/>
            <person name="Kieu A.C."/>
            <person name="Kisner P."/>
            <person name="Kumar M."/>
            <person name="Lance K."/>
            <person name="Landers T."/>
            <person name="Lara M."/>
            <person name="Lee W."/>
            <person name="Leger J.-P."/>
            <person name="Lennon N."/>
            <person name="Leuper L."/>
            <person name="LeVine S."/>
            <person name="Liu J."/>
            <person name="Liu X."/>
            <person name="Lokyitsang Y."/>
            <person name="Lokyitsang T."/>
            <person name="Lui A."/>
            <person name="Macdonald J."/>
            <person name="Major J."/>
            <person name="Marabella R."/>
            <person name="Maru K."/>
            <person name="Matthews C."/>
            <person name="McDonough S."/>
            <person name="Mehta T."/>
            <person name="Meldrim J."/>
            <person name="Melnikov A."/>
            <person name="Meneus L."/>
            <person name="Mihalev A."/>
            <person name="Mihova T."/>
            <person name="Miller K."/>
            <person name="Mittelman R."/>
            <person name="Mlenga V."/>
            <person name="Mulrain L."/>
            <person name="Munson G."/>
            <person name="Navidi A."/>
            <person name="Naylor J."/>
            <person name="Nguyen T."/>
            <person name="Nguyen N."/>
            <person name="Nguyen C."/>
            <person name="Nguyen T."/>
            <person name="Nicol R."/>
            <person name="Norbu N."/>
            <person name="Norbu C."/>
            <person name="Novod N."/>
            <person name="Nyima T."/>
            <person name="Olandt P."/>
            <person name="O'Neill B."/>
            <person name="O'Neill K."/>
            <person name="Osman S."/>
            <person name="Oyono L."/>
            <person name="Patti C."/>
            <person name="Perrin D."/>
            <person name="Phunkhang P."/>
            <person name="Pierre F."/>
            <person name="Priest M."/>
            <person name="Rachupka A."/>
            <person name="Raghuraman S."/>
            <person name="Rameau R."/>
            <person name="Ray V."/>
            <person name="Raymond C."/>
            <person name="Rege F."/>
            <person name="Rise C."/>
            <person name="Rogers J."/>
            <person name="Rogov P."/>
            <person name="Sahalie J."/>
            <person name="Settipalli S."/>
            <person name="Sharpe T."/>
            <person name="Shea T."/>
            <person name="Sheehan M."/>
            <person name="Sherpa N."/>
            <person name="Shi J."/>
            <person name="Shih D."/>
            <person name="Sloan J."/>
            <person name="Smith C."/>
            <person name="Sparrow T."/>
            <person name="Stalker J."/>
            <person name="Stange-Thomann N."/>
            <person name="Stavropoulos S."/>
            <person name="Stone C."/>
            <person name="Stone S."/>
            <person name="Sykes S."/>
            <person name="Tchuinga P."/>
            <person name="Tenzing P."/>
            <person name="Tesfaye S."/>
            <person name="Thoulutsang D."/>
            <person name="Thoulutsang Y."/>
            <person name="Topham K."/>
            <person name="Topping I."/>
            <person name="Tsamla T."/>
            <person name="Vassiliev H."/>
            <person name="Venkataraman V."/>
            <person name="Vo A."/>
            <person name="Wangchuk T."/>
            <person name="Wangdi T."/>
            <person name="Weiand M."/>
            <person name="Wilkinson J."/>
            <person name="Wilson A."/>
            <person name="Yadav S."/>
            <person name="Yang S."/>
            <person name="Yang X."/>
            <person name="Young G."/>
            <person name="Yu Q."/>
            <person name="Zainoun J."/>
            <person name="Zembek L."/>
            <person name="Zimmer A."/>
            <person name="Lander E.S."/>
        </authorList>
    </citation>
    <scope>NUCLEOTIDE SEQUENCE [LARGE SCALE GENOMIC DNA]</scope>
    <source>
        <strain>Boxer</strain>
    </source>
</reference>
<reference key="2">
    <citation type="journal article" date="2003" name="Mol. Cell">
        <title>Oligosaccharyltransferase isoforms that contain different catalytic STT3 subunits have distinct enzymatic properties.</title>
        <authorList>
            <person name="Kelleher D.J."/>
            <person name="Karaoglu D."/>
            <person name="Mandon E.C."/>
            <person name="Gilmore R."/>
        </authorList>
    </citation>
    <scope>IDENTIFICATION IN THE OLIGOSACCHARYLTRANSFERASE (OST) COMPLEX</scope>
    <scope>FUNCTION OF THE OLIGOSACCHARYLTRANSFERASE (OST) COMPLEX</scope>
    <scope>SUBCELLULAR LOCATION</scope>
</reference>
<reference key="3">
    <citation type="journal article" date="2005" name="Biochemistry">
        <title>Proteomic analysis of mammalian oligosaccharyltransferase reveals multiple subcomplexes that contain Sec61, TRAP, and two potential new subunits.</title>
        <authorList>
            <person name="Shibatani T."/>
            <person name="David L.L."/>
            <person name="McCormack A.L."/>
            <person name="Frueh K."/>
            <person name="Skach W.R."/>
        </authorList>
    </citation>
    <scope>IDENTIFICATION IN THE OLIGOSACCHARYLTRANSFERASE (OST) COMPLEX</scope>
</reference>
<reference key="4">
    <citation type="journal article" date="2014" name="J. Cell Biol.">
        <title>Oxidoreductase activity is necessary for N-glycosylation of cysteine-proximal acceptor sites in glycoproteins.</title>
        <authorList>
            <person name="Cherepanova N.A."/>
            <person name="Shrimal S."/>
            <person name="Gilmore R."/>
        </authorList>
    </citation>
    <scope>IDENTIFICATION IN THE OLIGOSACCHARYLTRANSFERASE (OST) COMPLEX</scope>
</reference>
<reference key="5">
    <citation type="journal article" date="2018" name="Science">
        <title>Structural basis for coupling protein transport and N-glycosylation at the mammalian endoplasmic reticulum.</title>
        <authorList>
            <person name="Braunger K."/>
            <person name="Pfeffer S."/>
            <person name="Shrimal S."/>
            <person name="Gilmore R."/>
            <person name="Berninghausen O."/>
            <person name="Mandon E.C."/>
            <person name="Becker T."/>
            <person name="Foerster F."/>
            <person name="Beckmann R."/>
        </authorList>
    </citation>
    <scope>STRUCTURE BY ELECTRON MICROSCOPY (4.20 ANGSTROMS) OF 1-696</scope>
</reference>
<sequence length="705" mass="80579">MTKLGFLRLSYEKQDTLLKLLILSMAAVLSFSTRLFAVLRFESVIHEFDPYFNYRTTRFLAEEGFYKFHNWFDDRAWYPLGRIIGGTIYPGLMITSAAIYHVLHFFHITIDIRNVCVFLAPLFSSFTTIVTYHLTKELKDAGAGLLAAAMIAVVPGYISRSVAGSYDNEGIAIFCMLLTYYMWIKAVKTGSIYWAAKCALAYFYMVSSWGGYVFLINLIPLHVLVLMLTGRFSHRIYVAYCTVYCLGTILSMQISFVGFQPVLSSEHMAAFGVFGLCQIHAFVDYLRSKLNPQQFEVLFRSVISLVGFVLLTVGALLMLTGKISPWTGRFYSLLDPSYAKNNIPIIASVSEHQPTTWSSYYFDLQLLVFMFPVGLYYCFSNLSDARIFIIMYGVTSMYFSAVMVRLMLVLAPVMCILSGIGVSQVLSTYMKNLDISRPDKKSKKQQDSTYPIKNEVASGMILVMAFFLITYTFHSTWVTSEAYSSPSIVLSARGGDGSRIIFDDFREAYYWLRHNTPEDAKVMSWWDYGYQITAMANRTILVDNNTWNNTHISRVGQAMASTEEKAYEIMRELDVSYVLVIFGGLTGYSSDDINKFLWMVRIGGSTDTGKHIKEHDYYTPTGEFRVDREGSPVLLNCLMYKMCYYRFGQVYTEAKRPPGFDRVRNAEIGNKDFELDVLEEAYTTEHWLVRIYKVKDLDNRGLSRT</sequence>
<evidence type="ECO:0000250" key="1">
    <source>
        <dbReference type="UniProtKB" id="B9KDD4"/>
    </source>
</evidence>
<evidence type="ECO:0000250" key="2">
    <source>
        <dbReference type="UniProtKB" id="P39007"/>
    </source>
</evidence>
<evidence type="ECO:0000250" key="3">
    <source>
        <dbReference type="UniProtKB" id="P46977"/>
    </source>
</evidence>
<evidence type="ECO:0000250" key="4">
    <source>
        <dbReference type="UniProtKB" id="Q5HTX9"/>
    </source>
</evidence>
<evidence type="ECO:0000255" key="5">
    <source>
        <dbReference type="PROSITE-ProRule" id="PRU00498"/>
    </source>
</evidence>
<evidence type="ECO:0000269" key="6">
    <source>
    </source>
</evidence>
<evidence type="ECO:0000269" key="7">
    <source>
    </source>
</evidence>
<evidence type="ECO:0000269" key="8">
    <source>
    </source>
</evidence>
<evidence type="ECO:0000269" key="9">
    <source>
    </source>
</evidence>
<evidence type="ECO:0000305" key="10"/>
<dbReference type="EC" id="2.4.99.18"/>
<dbReference type="EMBL" id="AAEX03003387">
    <property type="status" value="NOT_ANNOTATED_CDS"/>
    <property type="molecule type" value="Genomic_DNA"/>
</dbReference>
<dbReference type="RefSeq" id="XP_005619650.1">
    <property type="nucleotide sequence ID" value="XM_005619593.3"/>
</dbReference>
<dbReference type="RefSeq" id="XP_005619651.1">
    <property type="nucleotide sequence ID" value="XM_005619594.3"/>
</dbReference>
<dbReference type="RefSeq" id="XP_038391661.1">
    <property type="nucleotide sequence ID" value="XM_038535733.1"/>
</dbReference>
<dbReference type="RefSeq" id="XP_038391662.1">
    <property type="nucleotide sequence ID" value="XM_038535734.1"/>
</dbReference>
<dbReference type="RefSeq" id="XP_038391663.1">
    <property type="nucleotide sequence ID" value="XM_038535735.1"/>
</dbReference>
<dbReference type="RefSeq" id="XP_038520407.1">
    <property type="nucleotide sequence ID" value="XM_038664479.1"/>
</dbReference>
<dbReference type="RefSeq" id="XP_038520408.1">
    <property type="nucleotide sequence ID" value="XM_038664480.1"/>
</dbReference>
<dbReference type="RefSeq" id="XP_038520409.1">
    <property type="nucleotide sequence ID" value="XM_038664481.1"/>
</dbReference>
<dbReference type="RefSeq" id="XP_546418.4">
    <property type="nucleotide sequence ID" value="XM_546418.8"/>
</dbReference>
<dbReference type="PDB" id="6FTG">
    <property type="method" value="EM"/>
    <property type="resolution" value="9.10 A"/>
    <property type="chains" value="5=1-705"/>
</dbReference>
<dbReference type="PDB" id="6FTI">
    <property type="method" value="EM"/>
    <property type="resolution" value="4.20 A"/>
    <property type="chains" value="5=1-705"/>
</dbReference>
<dbReference type="PDB" id="6FTJ">
    <property type="method" value="EM"/>
    <property type="resolution" value="4.70 A"/>
    <property type="chains" value="5=1-696"/>
</dbReference>
<dbReference type="PDBsum" id="6FTG"/>
<dbReference type="PDBsum" id="6FTI"/>
<dbReference type="PDBsum" id="6FTJ"/>
<dbReference type="EMDB" id="EMD-4315"/>
<dbReference type="EMDB" id="EMD-4316"/>
<dbReference type="EMDB" id="EMD-4317"/>
<dbReference type="SMR" id="F1PJP5"/>
<dbReference type="CORUM" id="F1PJP5"/>
<dbReference type="FunCoup" id="F1PJP5">
    <property type="interactions" value="1303"/>
</dbReference>
<dbReference type="STRING" id="9615.ENSCAFP00000043484"/>
<dbReference type="GlyCosmos" id="F1PJP5">
    <property type="glycosylation" value="3 sites, No reported glycans"/>
</dbReference>
<dbReference type="PaxDb" id="9612-ENSCAFP00000015961"/>
<dbReference type="GeneID" id="489300"/>
<dbReference type="KEGG" id="cfa:489300"/>
<dbReference type="CTD" id="3703"/>
<dbReference type="eggNOG" id="KOG2292">
    <property type="taxonomic scope" value="Eukaryota"/>
</dbReference>
<dbReference type="HOGENOM" id="CLU_009279_1_0_1"/>
<dbReference type="InParanoid" id="F1PJP5"/>
<dbReference type="OrthoDB" id="10261066at2759"/>
<dbReference type="TreeFam" id="TF300822"/>
<dbReference type="UniPathway" id="UPA00378"/>
<dbReference type="Proteomes" id="UP000002254">
    <property type="component" value="Unplaced"/>
</dbReference>
<dbReference type="Proteomes" id="UP000694429">
    <property type="component" value="Unplaced"/>
</dbReference>
<dbReference type="Proteomes" id="UP000694542">
    <property type="component" value="Unplaced"/>
</dbReference>
<dbReference type="Proteomes" id="UP000805418">
    <property type="component" value="Unplaced"/>
</dbReference>
<dbReference type="GO" id="GO:0008250">
    <property type="term" value="C:oligosaccharyltransferase complex"/>
    <property type="evidence" value="ECO:0000314"/>
    <property type="project" value="UniProtKB"/>
</dbReference>
<dbReference type="GO" id="GO:0004579">
    <property type="term" value="F:dolichyl-diphosphooligosaccharide-protein glycotransferase activity"/>
    <property type="evidence" value="ECO:0000314"/>
    <property type="project" value="UniProtKB"/>
</dbReference>
<dbReference type="GO" id="GO:0046872">
    <property type="term" value="F:metal ion binding"/>
    <property type="evidence" value="ECO:0007669"/>
    <property type="project" value="UniProtKB-KW"/>
</dbReference>
<dbReference type="GO" id="GO:0043686">
    <property type="term" value="P:co-translational protein modification"/>
    <property type="evidence" value="ECO:0000250"/>
    <property type="project" value="UniProtKB"/>
</dbReference>
<dbReference type="GO" id="GO:0043687">
    <property type="term" value="P:post-translational protein modification"/>
    <property type="evidence" value="ECO:0000318"/>
    <property type="project" value="GO_Central"/>
</dbReference>
<dbReference type="GO" id="GO:0018279">
    <property type="term" value="P:protein N-linked glycosylation via asparagine"/>
    <property type="evidence" value="ECO:0000314"/>
    <property type="project" value="UniProtKB"/>
</dbReference>
<dbReference type="FunFam" id="3.40.50.12610:FF:000002">
    <property type="entry name" value="dolichyl-diphosphooligosaccharide--protein glycosyltransferase subunit STT3A"/>
    <property type="match status" value="1"/>
</dbReference>
<dbReference type="Gene3D" id="3.40.50.12610">
    <property type="match status" value="1"/>
</dbReference>
<dbReference type="InterPro" id="IPR054479">
    <property type="entry name" value="AglB-like_core"/>
</dbReference>
<dbReference type="InterPro" id="IPR003674">
    <property type="entry name" value="Oligo_trans_STT3"/>
</dbReference>
<dbReference type="InterPro" id="IPR048307">
    <property type="entry name" value="STT3_N"/>
</dbReference>
<dbReference type="PANTHER" id="PTHR13872">
    <property type="entry name" value="DOLICHYL-DIPHOSPHOOLIGOSACCHARIDE--PROTEIN GLYCOSYLTRANSFERASE SUBUNIT"/>
    <property type="match status" value="1"/>
</dbReference>
<dbReference type="PANTHER" id="PTHR13872:SF43">
    <property type="entry name" value="DOLICHYL-DIPHOSPHOOLIGOSACCHARIDE--PROTEIN GLYCOSYLTRANSFERASE SUBUNIT STT3A"/>
    <property type="match status" value="1"/>
</dbReference>
<dbReference type="Pfam" id="PF22627">
    <property type="entry name" value="AglB_core-like"/>
    <property type="match status" value="1"/>
</dbReference>
<dbReference type="Pfam" id="PF02516">
    <property type="entry name" value="STT3"/>
    <property type="match status" value="1"/>
</dbReference>
<protein>
    <recommendedName>
        <fullName evidence="3">Dolichyl-diphosphooligosaccharide--protein glycosyltransferase subunit STT3A</fullName>
        <shortName>Oligosaccharyl transferase subunit STT3A</shortName>
        <shortName>STT3-A</shortName>
        <ecNumber>2.4.99.18</ecNumber>
    </recommendedName>
</protein>